<accession>C3P6Y7</accession>
<comment type="function">
    <text evidence="1">Catalyzes the conversion of N-acetyl-diaminopimelate to diaminopimelate and acetate.</text>
</comment>
<comment type="catalytic activity">
    <reaction evidence="1">
        <text>N-acetyl-(2S,6S)-2,6-diaminopimelate + H2O = (2S,6S)-2,6-diaminopimelate + acetate</text>
        <dbReference type="Rhea" id="RHEA:20405"/>
        <dbReference type="ChEBI" id="CHEBI:15377"/>
        <dbReference type="ChEBI" id="CHEBI:30089"/>
        <dbReference type="ChEBI" id="CHEBI:57609"/>
        <dbReference type="ChEBI" id="CHEBI:58767"/>
        <dbReference type="EC" id="3.5.1.47"/>
    </reaction>
</comment>
<comment type="pathway">
    <text evidence="1">Amino-acid biosynthesis; L-lysine biosynthesis via DAP pathway; LL-2,6-diaminopimelate from (S)-tetrahydrodipicolinate (acetylase route): step 3/3.</text>
</comment>
<comment type="similarity">
    <text evidence="1">Belongs to the peptidase M20A family. N-acetyldiaminopimelate deacetylase subfamily.</text>
</comment>
<dbReference type="EC" id="3.5.1.47" evidence="1"/>
<dbReference type="EMBL" id="CP001598">
    <property type="protein sequence ID" value="ACQ49954.1"/>
    <property type="molecule type" value="Genomic_DNA"/>
</dbReference>
<dbReference type="RefSeq" id="WP_000301166.1">
    <property type="nucleotide sequence ID" value="NC_012659.1"/>
</dbReference>
<dbReference type="SMR" id="C3P6Y7"/>
<dbReference type="MEROPS" id="M20.A27"/>
<dbReference type="GeneID" id="45023868"/>
<dbReference type="KEGG" id="bai:BAA_4215"/>
<dbReference type="HOGENOM" id="CLU_023257_0_1_9"/>
<dbReference type="UniPathway" id="UPA00034">
    <property type="reaction ID" value="UER00024"/>
</dbReference>
<dbReference type="GO" id="GO:0050118">
    <property type="term" value="F:N-acetyldiaminopimelate deacetylase activity"/>
    <property type="evidence" value="ECO:0007669"/>
    <property type="project" value="UniProtKB-UniRule"/>
</dbReference>
<dbReference type="GO" id="GO:0019877">
    <property type="term" value="P:diaminopimelate biosynthetic process"/>
    <property type="evidence" value="ECO:0007669"/>
    <property type="project" value="UniProtKB-UniRule"/>
</dbReference>
<dbReference type="GO" id="GO:0009089">
    <property type="term" value="P:lysine biosynthetic process via diaminopimelate"/>
    <property type="evidence" value="ECO:0007669"/>
    <property type="project" value="UniProtKB-UniRule"/>
</dbReference>
<dbReference type="CDD" id="cd05670">
    <property type="entry name" value="M20_Acy1_YkuR-like"/>
    <property type="match status" value="1"/>
</dbReference>
<dbReference type="FunFam" id="3.30.70.360:FF:000001">
    <property type="entry name" value="N-acetyldiaminopimelate deacetylase"/>
    <property type="match status" value="1"/>
</dbReference>
<dbReference type="Gene3D" id="3.30.70.360">
    <property type="match status" value="1"/>
</dbReference>
<dbReference type="Gene3D" id="3.40.630.10">
    <property type="entry name" value="Zn peptidases"/>
    <property type="match status" value="1"/>
</dbReference>
<dbReference type="HAMAP" id="MF_01692">
    <property type="entry name" value="DapEL"/>
    <property type="match status" value="1"/>
</dbReference>
<dbReference type="InterPro" id="IPR023905">
    <property type="entry name" value="AcetylDAP_deacetylase"/>
</dbReference>
<dbReference type="InterPro" id="IPR017439">
    <property type="entry name" value="Amidohydrolase"/>
</dbReference>
<dbReference type="InterPro" id="IPR036264">
    <property type="entry name" value="Bact_exopeptidase_dim_dom"/>
</dbReference>
<dbReference type="InterPro" id="IPR002933">
    <property type="entry name" value="Peptidase_M20"/>
</dbReference>
<dbReference type="InterPro" id="IPR011650">
    <property type="entry name" value="Peptidase_M20_dimer"/>
</dbReference>
<dbReference type="NCBIfam" id="TIGR01891">
    <property type="entry name" value="amidohydrolases"/>
    <property type="match status" value="1"/>
</dbReference>
<dbReference type="PANTHER" id="PTHR11014:SF98">
    <property type="entry name" value="N-ACETYLDIAMINOPIMELATE DEACETYLASE"/>
    <property type="match status" value="1"/>
</dbReference>
<dbReference type="PANTHER" id="PTHR11014">
    <property type="entry name" value="PEPTIDASE M20 FAMILY MEMBER"/>
    <property type="match status" value="1"/>
</dbReference>
<dbReference type="Pfam" id="PF07687">
    <property type="entry name" value="M20_dimer"/>
    <property type="match status" value="1"/>
</dbReference>
<dbReference type="Pfam" id="PF01546">
    <property type="entry name" value="Peptidase_M20"/>
    <property type="match status" value="1"/>
</dbReference>
<dbReference type="PIRSF" id="PIRSF005962">
    <property type="entry name" value="Pept_M20D_amidohydro"/>
    <property type="match status" value="1"/>
</dbReference>
<dbReference type="SUPFAM" id="SSF55031">
    <property type="entry name" value="Bacterial exopeptidase dimerisation domain"/>
    <property type="match status" value="1"/>
</dbReference>
<dbReference type="SUPFAM" id="SSF53187">
    <property type="entry name" value="Zn-dependent exopeptidases"/>
    <property type="match status" value="1"/>
</dbReference>
<name>DAPEL_BACAA</name>
<gene>
    <name type="ordered locus">BAA_4215</name>
</gene>
<keyword id="KW-0028">Amino-acid biosynthesis</keyword>
<keyword id="KW-0220">Diaminopimelate biosynthesis</keyword>
<keyword id="KW-0378">Hydrolase</keyword>
<keyword id="KW-0457">Lysine biosynthesis</keyword>
<evidence type="ECO:0000255" key="1">
    <source>
        <dbReference type="HAMAP-Rule" id="MF_01692"/>
    </source>
</evidence>
<organism>
    <name type="scientific">Bacillus anthracis (strain A0248)</name>
    <dbReference type="NCBI Taxonomy" id="592021"/>
    <lineage>
        <taxon>Bacteria</taxon>
        <taxon>Bacillati</taxon>
        <taxon>Bacillota</taxon>
        <taxon>Bacilli</taxon>
        <taxon>Bacillales</taxon>
        <taxon>Bacillaceae</taxon>
        <taxon>Bacillus</taxon>
        <taxon>Bacillus cereus group</taxon>
    </lineage>
</organism>
<sequence length="376" mass="41896">MAVSKFVQIRRDLHKIPEIGFKEWKTQQYILDYIGTLSNEHVEVKVWRTGVIVKVKGKNPEKVIGYRADIDGLPITEETGYEFASVHEGMMHACGHDLHTTIGLGLLTAAVTERIDDDLVFLFQPAEEGPGGALPMLESEELKEWKPNIILGLHIAPEYPVGTIATKEGLLFANTSELYVDLKGKGGHAAYPHTANDMIVAASHLVTQLQSVISRNVNPLDSAVITIGKITGGTVQNIIAEKSRLEGTIRTLSVESMSRVKSRIEAIVAGIEASFQCEAVIDYGAMYHQVYNHEALTREFMQFVSEQTDMKVITCTEAMTGEDFGYMLQEIPGFMFWLGVNSEYGLHHAKLRPDEEAIEKAIVFLDQYVKWKGTRK</sequence>
<protein>
    <recommendedName>
        <fullName evidence="1">N-acetyldiaminopimelate deacetylase</fullName>
        <ecNumber evidence="1">3.5.1.47</ecNumber>
    </recommendedName>
</protein>
<reference key="1">
    <citation type="submission" date="2009-04" db="EMBL/GenBank/DDBJ databases">
        <title>Genome sequence of Bacillus anthracis A0248.</title>
        <authorList>
            <person name="Dodson R.J."/>
            <person name="Munk A.C."/>
            <person name="Bruce D."/>
            <person name="Detter C."/>
            <person name="Tapia R."/>
            <person name="Sutton G."/>
            <person name="Sims D."/>
            <person name="Brettin T."/>
        </authorList>
    </citation>
    <scope>NUCLEOTIDE SEQUENCE [LARGE SCALE GENOMIC DNA]</scope>
    <source>
        <strain>A0248</strain>
    </source>
</reference>
<proteinExistence type="inferred from homology"/>
<feature type="chain" id="PRO_1000187456" description="N-acetyldiaminopimelate deacetylase">
    <location>
        <begin position="1"/>
        <end position="376"/>
    </location>
</feature>
<feature type="active site" evidence="1">
    <location>
        <position position="69"/>
    </location>
</feature>
<feature type="active site" description="Proton acceptor" evidence="1">
    <location>
        <position position="128"/>
    </location>
</feature>